<feature type="chain" id="PRO_0000278040" description="UDP-N-acetylmuramoyl-L-alanyl-D-glutamate--2,6-diaminopimelate ligase">
    <location>
        <begin position="1"/>
        <end position="492"/>
    </location>
</feature>
<feature type="short sequence motif" description="Meso-diaminopimelate recognition motif">
    <location>
        <begin position="396"/>
        <end position="399"/>
    </location>
</feature>
<feature type="binding site" evidence="1">
    <location>
        <position position="21"/>
    </location>
    <ligand>
        <name>UDP-N-acetyl-alpha-D-muramoyl-L-alanyl-D-glutamate</name>
        <dbReference type="ChEBI" id="CHEBI:83900"/>
    </ligand>
</feature>
<feature type="binding site" evidence="1">
    <location>
        <begin position="98"/>
        <end position="104"/>
    </location>
    <ligand>
        <name>ATP</name>
        <dbReference type="ChEBI" id="CHEBI:30616"/>
    </ligand>
</feature>
<feature type="binding site" evidence="1">
    <location>
        <begin position="144"/>
        <end position="145"/>
    </location>
    <ligand>
        <name>UDP-N-acetyl-alpha-D-muramoyl-L-alanyl-D-glutamate</name>
        <dbReference type="ChEBI" id="CHEBI:83900"/>
    </ligand>
</feature>
<feature type="binding site" evidence="1">
    <location>
        <position position="171"/>
    </location>
    <ligand>
        <name>UDP-N-acetyl-alpha-D-muramoyl-L-alanyl-D-glutamate</name>
        <dbReference type="ChEBI" id="CHEBI:83900"/>
    </ligand>
</feature>
<feature type="binding site" evidence="1">
    <location>
        <position position="177"/>
    </location>
    <ligand>
        <name>UDP-N-acetyl-alpha-D-muramoyl-L-alanyl-D-glutamate</name>
        <dbReference type="ChEBI" id="CHEBI:83900"/>
    </ligand>
</feature>
<feature type="binding site" evidence="1">
    <location>
        <position position="179"/>
    </location>
    <ligand>
        <name>UDP-N-acetyl-alpha-D-muramoyl-L-alanyl-D-glutamate</name>
        <dbReference type="ChEBI" id="CHEBI:83900"/>
    </ligand>
</feature>
<feature type="binding site" evidence="1">
    <location>
        <position position="372"/>
    </location>
    <ligand>
        <name>meso-2,6-diaminopimelate</name>
        <dbReference type="ChEBI" id="CHEBI:57791"/>
    </ligand>
</feature>
<feature type="binding site" evidence="1">
    <location>
        <begin position="396"/>
        <end position="399"/>
    </location>
    <ligand>
        <name>meso-2,6-diaminopimelate</name>
        <dbReference type="ChEBI" id="CHEBI:57791"/>
    </ligand>
</feature>
<feature type="binding site" evidence="1">
    <location>
        <position position="446"/>
    </location>
    <ligand>
        <name>meso-2,6-diaminopimelate</name>
        <dbReference type="ChEBI" id="CHEBI:57791"/>
    </ligand>
</feature>
<feature type="binding site" evidence="1">
    <location>
        <position position="450"/>
    </location>
    <ligand>
        <name>meso-2,6-diaminopimelate</name>
        <dbReference type="ChEBI" id="CHEBI:57791"/>
    </ligand>
</feature>
<feature type="modified residue" description="N6-carboxylysine" evidence="1">
    <location>
        <position position="211"/>
    </location>
</feature>
<name>MURE_RICTY</name>
<dbReference type="EC" id="6.3.2.13" evidence="1"/>
<dbReference type="EMBL" id="AE017197">
    <property type="protein sequence ID" value="AAU04050.1"/>
    <property type="status" value="ALT_INIT"/>
    <property type="molecule type" value="Genomic_DNA"/>
</dbReference>
<dbReference type="RefSeq" id="WP_014419991.1">
    <property type="nucleotide sequence ID" value="NC_006142.1"/>
</dbReference>
<dbReference type="SMR" id="Q68WE2"/>
<dbReference type="KEGG" id="rty:RT0585"/>
<dbReference type="eggNOG" id="COG0769">
    <property type="taxonomic scope" value="Bacteria"/>
</dbReference>
<dbReference type="HOGENOM" id="CLU_022291_3_1_5"/>
<dbReference type="OrthoDB" id="9800958at2"/>
<dbReference type="UniPathway" id="UPA00219"/>
<dbReference type="Proteomes" id="UP000000604">
    <property type="component" value="Chromosome"/>
</dbReference>
<dbReference type="GO" id="GO:0005737">
    <property type="term" value="C:cytoplasm"/>
    <property type="evidence" value="ECO:0007669"/>
    <property type="project" value="UniProtKB-SubCell"/>
</dbReference>
<dbReference type="GO" id="GO:0005524">
    <property type="term" value="F:ATP binding"/>
    <property type="evidence" value="ECO:0007669"/>
    <property type="project" value="UniProtKB-UniRule"/>
</dbReference>
<dbReference type="GO" id="GO:0000287">
    <property type="term" value="F:magnesium ion binding"/>
    <property type="evidence" value="ECO:0007669"/>
    <property type="project" value="UniProtKB-UniRule"/>
</dbReference>
<dbReference type="GO" id="GO:0008765">
    <property type="term" value="F:UDP-N-acetylmuramoylalanyl-D-glutamate-2,6-diaminopimelate ligase activity"/>
    <property type="evidence" value="ECO:0007669"/>
    <property type="project" value="UniProtKB-UniRule"/>
</dbReference>
<dbReference type="GO" id="GO:0051301">
    <property type="term" value="P:cell division"/>
    <property type="evidence" value="ECO:0007669"/>
    <property type="project" value="UniProtKB-KW"/>
</dbReference>
<dbReference type="GO" id="GO:0071555">
    <property type="term" value="P:cell wall organization"/>
    <property type="evidence" value="ECO:0007669"/>
    <property type="project" value="UniProtKB-KW"/>
</dbReference>
<dbReference type="GO" id="GO:0009252">
    <property type="term" value="P:peptidoglycan biosynthetic process"/>
    <property type="evidence" value="ECO:0007669"/>
    <property type="project" value="UniProtKB-UniRule"/>
</dbReference>
<dbReference type="GO" id="GO:0008360">
    <property type="term" value="P:regulation of cell shape"/>
    <property type="evidence" value="ECO:0007669"/>
    <property type="project" value="UniProtKB-KW"/>
</dbReference>
<dbReference type="Gene3D" id="3.90.190.20">
    <property type="entry name" value="Mur ligase, C-terminal domain"/>
    <property type="match status" value="1"/>
</dbReference>
<dbReference type="Gene3D" id="3.40.1190.10">
    <property type="entry name" value="Mur-like, catalytic domain"/>
    <property type="match status" value="1"/>
</dbReference>
<dbReference type="Gene3D" id="3.40.1390.10">
    <property type="entry name" value="MurE/MurF, N-terminal domain"/>
    <property type="match status" value="1"/>
</dbReference>
<dbReference type="HAMAP" id="MF_00208">
    <property type="entry name" value="MurE"/>
    <property type="match status" value="1"/>
</dbReference>
<dbReference type="InterPro" id="IPR036565">
    <property type="entry name" value="Mur-like_cat_sf"/>
</dbReference>
<dbReference type="InterPro" id="IPR004101">
    <property type="entry name" value="Mur_ligase_C"/>
</dbReference>
<dbReference type="InterPro" id="IPR036615">
    <property type="entry name" value="Mur_ligase_C_dom_sf"/>
</dbReference>
<dbReference type="InterPro" id="IPR013221">
    <property type="entry name" value="Mur_ligase_cen"/>
</dbReference>
<dbReference type="InterPro" id="IPR000713">
    <property type="entry name" value="Mur_ligase_N"/>
</dbReference>
<dbReference type="InterPro" id="IPR035911">
    <property type="entry name" value="MurE/MurF_N"/>
</dbReference>
<dbReference type="InterPro" id="IPR005761">
    <property type="entry name" value="UDP-N-AcMur-Glu-dNH2Pim_ligase"/>
</dbReference>
<dbReference type="NCBIfam" id="TIGR01085">
    <property type="entry name" value="murE"/>
    <property type="match status" value="1"/>
</dbReference>
<dbReference type="NCBIfam" id="NF001124">
    <property type="entry name" value="PRK00139.1-2"/>
    <property type="match status" value="1"/>
</dbReference>
<dbReference type="NCBIfam" id="NF001126">
    <property type="entry name" value="PRK00139.1-4"/>
    <property type="match status" value="1"/>
</dbReference>
<dbReference type="PANTHER" id="PTHR23135">
    <property type="entry name" value="MUR LIGASE FAMILY MEMBER"/>
    <property type="match status" value="1"/>
</dbReference>
<dbReference type="PANTHER" id="PTHR23135:SF4">
    <property type="entry name" value="UDP-N-ACETYLMURAMOYL-L-ALANYL-D-GLUTAMATE--2,6-DIAMINOPIMELATE LIGASE MURE HOMOLOG, CHLOROPLASTIC"/>
    <property type="match status" value="1"/>
</dbReference>
<dbReference type="Pfam" id="PF01225">
    <property type="entry name" value="Mur_ligase"/>
    <property type="match status" value="1"/>
</dbReference>
<dbReference type="Pfam" id="PF02875">
    <property type="entry name" value="Mur_ligase_C"/>
    <property type="match status" value="1"/>
</dbReference>
<dbReference type="Pfam" id="PF08245">
    <property type="entry name" value="Mur_ligase_M"/>
    <property type="match status" value="1"/>
</dbReference>
<dbReference type="SUPFAM" id="SSF53623">
    <property type="entry name" value="MurD-like peptide ligases, catalytic domain"/>
    <property type="match status" value="1"/>
</dbReference>
<dbReference type="SUPFAM" id="SSF53244">
    <property type="entry name" value="MurD-like peptide ligases, peptide-binding domain"/>
    <property type="match status" value="1"/>
</dbReference>
<dbReference type="SUPFAM" id="SSF63418">
    <property type="entry name" value="MurE/MurF N-terminal domain"/>
    <property type="match status" value="1"/>
</dbReference>
<organism>
    <name type="scientific">Rickettsia typhi (strain ATCC VR-144 / Wilmington)</name>
    <dbReference type="NCBI Taxonomy" id="257363"/>
    <lineage>
        <taxon>Bacteria</taxon>
        <taxon>Pseudomonadati</taxon>
        <taxon>Pseudomonadota</taxon>
        <taxon>Alphaproteobacteria</taxon>
        <taxon>Rickettsiales</taxon>
        <taxon>Rickettsiaceae</taxon>
        <taxon>Rickettsieae</taxon>
        <taxon>Rickettsia</taxon>
        <taxon>typhus group</taxon>
    </lineage>
</organism>
<reference key="1">
    <citation type="journal article" date="2004" name="J. Bacteriol.">
        <title>Complete genome sequence of Rickettsia typhi and comparison with sequences of other Rickettsiae.</title>
        <authorList>
            <person name="McLeod M.P."/>
            <person name="Qin X."/>
            <person name="Karpathy S.E."/>
            <person name="Gioia J."/>
            <person name="Highlander S.K."/>
            <person name="Fox G.E."/>
            <person name="McNeill T.Z."/>
            <person name="Jiang H."/>
            <person name="Muzny D."/>
            <person name="Jacob L.S."/>
            <person name="Hawes A.C."/>
            <person name="Sodergren E."/>
            <person name="Gill R."/>
            <person name="Hume J."/>
            <person name="Morgan M."/>
            <person name="Fan G."/>
            <person name="Amin A.G."/>
            <person name="Gibbs R.A."/>
            <person name="Hong C."/>
            <person name="Yu X.-J."/>
            <person name="Walker D.H."/>
            <person name="Weinstock G.M."/>
        </authorList>
    </citation>
    <scope>NUCLEOTIDE SEQUENCE [LARGE SCALE GENOMIC DNA]</scope>
    <source>
        <strain>ATCC VR-144 / Wilmington</strain>
    </source>
</reference>
<keyword id="KW-0067">ATP-binding</keyword>
<keyword id="KW-0131">Cell cycle</keyword>
<keyword id="KW-0132">Cell division</keyword>
<keyword id="KW-0133">Cell shape</keyword>
<keyword id="KW-0961">Cell wall biogenesis/degradation</keyword>
<keyword id="KW-0963">Cytoplasm</keyword>
<keyword id="KW-0436">Ligase</keyword>
<keyword id="KW-0460">Magnesium</keyword>
<keyword id="KW-0547">Nucleotide-binding</keyword>
<keyword id="KW-0573">Peptidoglycan synthesis</keyword>
<comment type="function">
    <text evidence="1">Catalyzes the addition of meso-diaminopimelic acid to the nucleotide precursor UDP-N-acetylmuramoyl-L-alanyl-D-glutamate (UMAG) in the biosynthesis of bacterial cell-wall peptidoglycan.</text>
</comment>
<comment type="catalytic activity">
    <reaction evidence="1">
        <text>UDP-N-acetyl-alpha-D-muramoyl-L-alanyl-D-glutamate + meso-2,6-diaminopimelate + ATP = UDP-N-acetyl-alpha-D-muramoyl-L-alanyl-gamma-D-glutamyl-meso-2,6-diaminopimelate + ADP + phosphate + H(+)</text>
        <dbReference type="Rhea" id="RHEA:23676"/>
        <dbReference type="ChEBI" id="CHEBI:15378"/>
        <dbReference type="ChEBI" id="CHEBI:30616"/>
        <dbReference type="ChEBI" id="CHEBI:43474"/>
        <dbReference type="ChEBI" id="CHEBI:57791"/>
        <dbReference type="ChEBI" id="CHEBI:83900"/>
        <dbReference type="ChEBI" id="CHEBI:83905"/>
        <dbReference type="ChEBI" id="CHEBI:456216"/>
        <dbReference type="EC" id="6.3.2.13"/>
    </reaction>
</comment>
<comment type="cofactor">
    <cofactor evidence="1">
        <name>Mg(2+)</name>
        <dbReference type="ChEBI" id="CHEBI:18420"/>
    </cofactor>
</comment>
<comment type="pathway">
    <text evidence="1">Cell wall biogenesis; peptidoglycan biosynthesis.</text>
</comment>
<comment type="subcellular location">
    <subcellularLocation>
        <location evidence="1">Cytoplasm</location>
    </subcellularLocation>
</comment>
<comment type="PTM">
    <text evidence="1">Carboxylation is probably crucial for Mg(2+) binding and, consequently, for the gamma-phosphate positioning of ATP.</text>
</comment>
<comment type="similarity">
    <text evidence="1">Belongs to the MurCDEF family. MurE subfamily.</text>
</comment>
<comment type="sequence caution" evidence="2">
    <conflict type="erroneous initiation">
        <sequence resource="EMBL-CDS" id="AAU04050"/>
    </conflict>
</comment>
<proteinExistence type="inferred from homology"/>
<gene>
    <name evidence="1" type="primary">murE</name>
    <name type="ordered locus">RT0585</name>
</gene>
<sequence>MKYNLNQLFKNYKINGLSTNSQTVKENEVFFALKGQNVDGNDFINDALNNGAVLVITENKKNTVIDKVIYVEDVYEALYEAIEIFYPKKPKNLISVTGTNGKSSVVSYIAQTYFLLRKKAAFIGTIGLEIFGCNNIINDVPSLTTLDYLNFRKIAHNLAEDSIEYLAFEASSHGLEQGRLGKTKVNIVSFTSFSQDHLDYHHTKENYLLAKLKLFTDHLLPSGIAILNSDIEEIEFVKDYLRNNNVKFITVGKKGDVQITKITCSLTGQNIDFIFNNIIYNLHTLIIGSFQASNLLIAALTLYYTGFKFDEIIEALSKVKPVKGRMERIDGTNIFVDYSHTPDALEKALIELQNIKPHGGKLSVIFGCGGDRDKTKRGLMGKIAAKFADNVIITDDNPRFEDPKLIRTEIIRGIGTATYTEIESREEAIKYGINNLKQDDILLIAGKGHENYQIVGDKKLPFDDSEVVRKYLFSMSCTRNQQKHLVSSRTVV</sequence>
<protein>
    <recommendedName>
        <fullName evidence="1">UDP-N-acetylmuramoyl-L-alanyl-D-glutamate--2,6-diaminopimelate ligase</fullName>
        <ecNumber evidence="1">6.3.2.13</ecNumber>
    </recommendedName>
    <alternativeName>
        <fullName evidence="1">Meso-A2pm-adding enzyme</fullName>
    </alternativeName>
    <alternativeName>
        <fullName evidence="1">Meso-diaminopimelate-adding enzyme</fullName>
    </alternativeName>
    <alternativeName>
        <fullName evidence="1">UDP-MurNAc-L-Ala-D-Glu:meso-diaminopimelate ligase</fullName>
    </alternativeName>
    <alternativeName>
        <fullName evidence="1">UDP-MurNAc-tripeptide synthetase</fullName>
    </alternativeName>
    <alternativeName>
        <fullName evidence="1">UDP-N-acetylmuramyl-tripeptide synthetase</fullName>
    </alternativeName>
</protein>
<accession>Q68WE2</accession>
<evidence type="ECO:0000255" key="1">
    <source>
        <dbReference type="HAMAP-Rule" id="MF_00208"/>
    </source>
</evidence>
<evidence type="ECO:0000305" key="2"/>